<organism>
    <name type="scientific">Salmonella choleraesuis (strain SC-B67)</name>
    <dbReference type="NCBI Taxonomy" id="321314"/>
    <lineage>
        <taxon>Bacteria</taxon>
        <taxon>Pseudomonadati</taxon>
        <taxon>Pseudomonadota</taxon>
        <taxon>Gammaproteobacteria</taxon>
        <taxon>Enterobacterales</taxon>
        <taxon>Enterobacteriaceae</taxon>
        <taxon>Salmonella</taxon>
    </lineage>
</organism>
<accession>Q57SZ6</accession>
<gene>
    <name evidence="1" type="primary">rnhA</name>
    <name type="ordered locus">SCH_0259</name>
</gene>
<comment type="function">
    <text evidence="1">Endonuclease that specifically degrades the RNA of RNA-DNA hybrids.</text>
</comment>
<comment type="catalytic activity">
    <reaction evidence="1">
        <text>Endonucleolytic cleavage to 5'-phosphomonoester.</text>
        <dbReference type="EC" id="3.1.26.4"/>
    </reaction>
</comment>
<comment type="cofactor">
    <cofactor evidence="1">
        <name>Mg(2+)</name>
        <dbReference type="ChEBI" id="CHEBI:18420"/>
    </cofactor>
    <text evidence="1">Binds 1 Mg(2+) ion per subunit. May bind a second metal ion at a regulatory site, or after substrate binding.</text>
</comment>
<comment type="subunit">
    <text evidence="1">Monomer.</text>
</comment>
<comment type="subcellular location">
    <subcellularLocation>
        <location evidence="1">Cytoplasm</location>
    </subcellularLocation>
</comment>
<comment type="similarity">
    <text evidence="1">Belongs to the RNase H family.</text>
</comment>
<comment type="sequence caution" evidence="3">
    <conflict type="erroneous initiation">
        <sequence resource="EMBL-CDS" id="AAX64165"/>
    </conflict>
</comment>
<evidence type="ECO:0000255" key="1">
    <source>
        <dbReference type="HAMAP-Rule" id="MF_00042"/>
    </source>
</evidence>
<evidence type="ECO:0000255" key="2">
    <source>
        <dbReference type="PROSITE-ProRule" id="PRU00408"/>
    </source>
</evidence>
<evidence type="ECO:0000305" key="3"/>
<sequence length="155" mass="17510">MLKQVEIFTDGSCLGNPGPGGYGAILRYRGHEKTFSEGYTLTTNNRMELMAAIVALEALKEHCEVTLSTDSQYVRQGITQWIHNWKKRGWKTAEKKPVKNVDLWKRLDAALGQHQIKWVWVKGHAGHPENERCDELARAAAMNPTQEDSGYQAEA</sequence>
<keyword id="KW-0963">Cytoplasm</keyword>
<keyword id="KW-0255">Endonuclease</keyword>
<keyword id="KW-0378">Hydrolase</keyword>
<keyword id="KW-0460">Magnesium</keyword>
<keyword id="KW-0479">Metal-binding</keyword>
<keyword id="KW-0540">Nuclease</keyword>
<feature type="chain" id="PRO_0000332674" description="Ribonuclease H">
    <location>
        <begin position="1"/>
        <end position="155"/>
    </location>
</feature>
<feature type="domain" description="RNase H type-1" evidence="2">
    <location>
        <begin position="1"/>
        <end position="142"/>
    </location>
</feature>
<feature type="binding site" evidence="1">
    <location>
        <position position="10"/>
    </location>
    <ligand>
        <name>Mg(2+)</name>
        <dbReference type="ChEBI" id="CHEBI:18420"/>
        <label>1</label>
    </ligand>
</feature>
<feature type="binding site" evidence="1">
    <location>
        <position position="10"/>
    </location>
    <ligand>
        <name>Mg(2+)</name>
        <dbReference type="ChEBI" id="CHEBI:18420"/>
        <label>2</label>
    </ligand>
</feature>
<feature type="binding site" evidence="1">
    <location>
        <position position="48"/>
    </location>
    <ligand>
        <name>Mg(2+)</name>
        <dbReference type="ChEBI" id="CHEBI:18420"/>
        <label>1</label>
    </ligand>
</feature>
<feature type="binding site" evidence="1">
    <location>
        <position position="70"/>
    </location>
    <ligand>
        <name>Mg(2+)</name>
        <dbReference type="ChEBI" id="CHEBI:18420"/>
        <label>1</label>
    </ligand>
</feature>
<feature type="binding site" evidence="1">
    <location>
        <position position="134"/>
    </location>
    <ligand>
        <name>Mg(2+)</name>
        <dbReference type="ChEBI" id="CHEBI:18420"/>
        <label>2</label>
    </ligand>
</feature>
<reference key="1">
    <citation type="journal article" date="2005" name="Nucleic Acids Res.">
        <title>The genome sequence of Salmonella enterica serovar Choleraesuis, a highly invasive and resistant zoonotic pathogen.</title>
        <authorList>
            <person name="Chiu C.-H."/>
            <person name="Tang P."/>
            <person name="Chu C."/>
            <person name="Hu S."/>
            <person name="Bao Q."/>
            <person name="Yu J."/>
            <person name="Chou Y.-Y."/>
            <person name="Wang H.-S."/>
            <person name="Lee Y.-S."/>
        </authorList>
    </citation>
    <scope>NUCLEOTIDE SEQUENCE [LARGE SCALE GENOMIC DNA]</scope>
    <source>
        <strain>SC-B67</strain>
    </source>
</reference>
<name>RNH_SALCH</name>
<dbReference type="EC" id="3.1.26.4" evidence="1"/>
<dbReference type="EMBL" id="AE017220">
    <property type="protein sequence ID" value="AAX64165.1"/>
    <property type="status" value="ALT_INIT"/>
    <property type="molecule type" value="Genomic_DNA"/>
</dbReference>
<dbReference type="RefSeq" id="WP_000917872.1">
    <property type="nucleotide sequence ID" value="NC_006905.1"/>
</dbReference>
<dbReference type="SMR" id="Q57SZ6"/>
<dbReference type="KEGG" id="sec:SCH_0259"/>
<dbReference type="HOGENOM" id="CLU_1015215_0_0_6"/>
<dbReference type="Proteomes" id="UP000000538">
    <property type="component" value="Chromosome"/>
</dbReference>
<dbReference type="GO" id="GO:0005737">
    <property type="term" value="C:cytoplasm"/>
    <property type="evidence" value="ECO:0007669"/>
    <property type="project" value="UniProtKB-SubCell"/>
</dbReference>
<dbReference type="GO" id="GO:0000287">
    <property type="term" value="F:magnesium ion binding"/>
    <property type="evidence" value="ECO:0007669"/>
    <property type="project" value="UniProtKB-UniRule"/>
</dbReference>
<dbReference type="GO" id="GO:0003676">
    <property type="term" value="F:nucleic acid binding"/>
    <property type="evidence" value="ECO:0007669"/>
    <property type="project" value="InterPro"/>
</dbReference>
<dbReference type="GO" id="GO:0004523">
    <property type="term" value="F:RNA-DNA hybrid ribonuclease activity"/>
    <property type="evidence" value="ECO:0007669"/>
    <property type="project" value="UniProtKB-UniRule"/>
</dbReference>
<dbReference type="GO" id="GO:0043137">
    <property type="term" value="P:DNA replication, removal of RNA primer"/>
    <property type="evidence" value="ECO:0007669"/>
    <property type="project" value="TreeGrafter"/>
</dbReference>
<dbReference type="CDD" id="cd09278">
    <property type="entry name" value="RNase_HI_prokaryote_like"/>
    <property type="match status" value="1"/>
</dbReference>
<dbReference type="FunFam" id="3.30.420.10:FF:000008">
    <property type="entry name" value="Ribonuclease H"/>
    <property type="match status" value="1"/>
</dbReference>
<dbReference type="Gene3D" id="3.30.420.10">
    <property type="entry name" value="Ribonuclease H-like superfamily/Ribonuclease H"/>
    <property type="match status" value="1"/>
</dbReference>
<dbReference type="HAMAP" id="MF_00042">
    <property type="entry name" value="RNase_H"/>
    <property type="match status" value="1"/>
</dbReference>
<dbReference type="InterPro" id="IPR050092">
    <property type="entry name" value="RNase_H"/>
</dbReference>
<dbReference type="InterPro" id="IPR012337">
    <property type="entry name" value="RNaseH-like_sf"/>
</dbReference>
<dbReference type="InterPro" id="IPR002156">
    <property type="entry name" value="RNaseH_domain"/>
</dbReference>
<dbReference type="InterPro" id="IPR036397">
    <property type="entry name" value="RNaseH_sf"/>
</dbReference>
<dbReference type="InterPro" id="IPR022892">
    <property type="entry name" value="RNaseHI"/>
</dbReference>
<dbReference type="NCBIfam" id="NF001236">
    <property type="entry name" value="PRK00203.1"/>
    <property type="match status" value="1"/>
</dbReference>
<dbReference type="PANTHER" id="PTHR10642">
    <property type="entry name" value="RIBONUCLEASE H1"/>
    <property type="match status" value="1"/>
</dbReference>
<dbReference type="PANTHER" id="PTHR10642:SF26">
    <property type="entry name" value="RIBONUCLEASE H1"/>
    <property type="match status" value="1"/>
</dbReference>
<dbReference type="Pfam" id="PF00075">
    <property type="entry name" value="RNase_H"/>
    <property type="match status" value="1"/>
</dbReference>
<dbReference type="SUPFAM" id="SSF53098">
    <property type="entry name" value="Ribonuclease H-like"/>
    <property type="match status" value="1"/>
</dbReference>
<dbReference type="PROSITE" id="PS50879">
    <property type="entry name" value="RNASE_H_1"/>
    <property type="match status" value="1"/>
</dbReference>
<protein>
    <recommendedName>
        <fullName evidence="1">Ribonuclease H</fullName>
        <shortName evidence="1">RNase H</shortName>
        <ecNumber evidence="1">3.1.26.4</ecNumber>
    </recommendedName>
</protein>
<proteinExistence type="inferred from homology"/>